<comment type="function">
    <text evidence="1">Catalyzes the formation of 6,7-dimethyl-8-ribityllumazine by condensation of 5-amino-6-(D-ribitylamino)uracil with 3,4-dihydroxy-2-butanone 4-phosphate. This is the penultimate step in the biosynthesis of riboflavin.</text>
</comment>
<comment type="catalytic activity">
    <reaction evidence="1">
        <text>(2S)-2-hydroxy-3-oxobutyl phosphate + 5-amino-6-(D-ribitylamino)uracil = 6,7-dimethyl-8-(1-D-ribityl)lumazine + phosphate + 2 H2O + H(+)</text>
        <dbReference type="Rhea" id="RHEA:26152"/>
        <dbReference type="ChEBI" id="CHEBI:15377"/>
        <dbReference type="ChEBI" id="CHEBI:15378"/>
        <dbReference type="ChEBI" id="CHEBI:15934"/>
        <dbReference type="ChEBI" id="CHEBI:43474"/>
        <dbReference type="ChEBI" id="CHEBI:58201"/>
        <dbReference type="ChEBI" id="CHEBI:58830"/>
        <dbReference type="EC" id="2.5.1.78"/>
    </reaction>
</comment>
<comment type="pathway">
    <text evidence="1">Cofactor biosynthesis; riboflavin biosynthesis; riboflavin from 2-hydroxy-3-oxobutyl phosphate and 5-amino-6-(D-ribitylamino)uracil: step 1/2.</text>
</comment>
<comment type="similarity">
    <text evidence="1">Belongs to the DMRL synthase family.</text>
</comment>
<dbReference type="EC" id="2.5.1.78" evidence="1"/>
<dbReference type="EMBL" id="CP001095">
    <property type="protein sequence ID" value="ACJ51510.1"/>
    <property type="molecule type" value="Genomic_DNA"/>
</dbReference>
<dbReference type="EMBL" id="AP010889">
    <property type="protein sequence ID" value="BAJ67990.1"/>
    <property type="molecule type" value="Genomic_DNA"/>
</dbReference>
<dbReference type="SMR" id="B7GN04"/>
<dbReference type="KEGG" id="bln:Blon_0389"/>
<dbReference type="KEGG" id="blon:BLIJ_0396"/>
<dbReference type="PATRIC" id="fig|391904.8.peg.401"/>
<dbReference type="HOGENOM" id="CLU_089358_1_1_11"/>
<dbReference type="UniPathway" id="UPA00275">
    <property type="reaction ID" value="UER00404"/>
</dbReference>
<dbReference type="Proteomes" id="UP000001360">
    <property type="component" value="Chromosome"/>
</dbReference>
<dbReference type="GO" id="GO:0005829">
    <property type="term" value="C:cytosol"/>
    <property type="evidence" value="ECO:0007669"/>
    <property type="project" value="TreeGrafter"/>
</dbReference>
<dbReference type="GO" id="GO:0009349">
    <property type="term" value="C:riboflavin synthase complex"/>
    <property type="evidence" value="ECO:0007669"/>
    <property type="project" value="InterPro"/>
</dbReference>
<dbReference type="GO" id="GO:0000906">
    <property type="term" value="F:6,7-dimethyl-8-ribityllumazine synthase activity"/>
    <property type="evidence" value="ECO:0007669"/>
    <property type="project" value="UniProtKB-UniRule"/>
</dbReference>
<dbReference type="GO" id="GO:0009231">
    <property type="term" value="P:riboflavin biosynthetic process"/>
    <property type="evidence" value="ECO:0007669"/>
    <property type="project" value="UniProtKB-UniRule"/>
</dbReference>
<dbReference type="CDD" id="cd09209">
    <property type="entry name" value="Lumazine_synthase-I"/>
    <property type="match status" value="1"/>
</dbReference>
<dbReference type="FunFam" id="3.40.50.960:FF:000001">
    <property type="entry name" value="6,7-dimethyl-8-ribityllumazine synthase"/>
    <property type="match status" value="1"/>
</dbReference>
<dbReference type="Gene3D" id="3.40.50.960">
    <property type="entry name" value="Lumazine/riboflavin synthase"/>
    <property type="match status" value="1"/>
</dbReference>
<dbReference type="HAMAP" id="MF_00178">
    <property type="entry name" value="Lumazine_synth"/>
    <property type="match status" value="1"/>
</dbReference>
<dbReference type="InterPro" id="IPR034964">
    <property type="entry name" value="LS"/>
</dbReference>
<dbReference type="InterPro" id="IPR002180">
    <property type="entry name" value="LS/RS"/>
</dbReference>
<dbReference type="InterPro" id="IPR036467">
    <property type="entry name" value="LS/RS_sf"/>
</dbReference>
<dbReference type="NCBIfam" id="TIGR00114">
    <property type="entry name" value="lumazine-synth"/>
    <property type="match status" value="1"/>
</dbReference>
<dbReference type="NCBIfam" id="NF000812">
    <property type="entry name" value="PRK00061.1-4"/>
    <property type="match status" value="1"/>
</dbReference>
<dbReference type="PANTHER" id="PTHR21058:SF0">
    <property type="entry name" value="6,7-DIMETHYL-8-RIBITYLLUMAZINE SYNTHASE"/>
    <property type="match status" value="1"/>
</dbReference>
<dbReference type="PANTHER" id="PTHR21058">
    <property type="entry name" value="6,7-DIMETHYL-8-RIBITYLLUMAZINE SYNTHASE DMRL SYNTHASE LUMAZINE SYNTHASE"/>
    <property type="match status" value="1"/>
</dbReference>
<dbReference type="Pfam" id="PF00885">
    <property type="entry name" value="DMRL_synthase"/>
    <property type="match status" value="1"/>
</dbReference>
<dbReference type="SUPFAM" id="SSF52121">
    <property type="entry name" value="Lumazine synthase"/>
    <property type="match status" value="1"/>
</dbReference>
<proteinExistence type="inferred from homology"/>
<protein>
    <recommendedName>
        <fullName evidence="1">6,7-dimethyl-8-ribityllumazine synthase</fullName>
        <shortName evidence="1">DMRL synthase</shortName>
        <shortName evidence="1">LS</shortName>
        <shortName evidence="1">Lumazine synthase</shortName>
        <ecNumber evidence="1">2.5.1.78</ecNumber>
    </recommendedName>
</protein>
<evidence type="ECO:0000255" key="1">
    <source>
        <dbReference type="HAMAP-Rule" id="MF_00178"/>
    </source>
</evidence>
<keyword id="KW-0686">Riboflavin biosynthesis</keyword>
<keyword id="KW-0808">Transferase</keyword>
<feature type="chain" id="PRO_1000195464" description="6,7-dimethyl-8-ribityllumazine synthase">
    <location>
        <begin position="1"/>
        <end position="155"/>
    </location>
</feature>
<feature type="active site" description="Proton donor" evidence="1">
    <location>
        <position position="88"/>
    </location>
</feature>
<feature type="binding site" evidence="1">
    <location>
        <position position="22"/>
    </location>
    <ligand>
        <name>5-amino-6-(D-ribitylamino)uracil</name>
        <dbReference type="ChEBI" id="CHEBI:15934"/>
    </ligand>
</feature>
<feature type="binding site" evidence="1">
    <location>
        <begin position="56"/>
        <end position="58"/>
    </location>
    <ligand>
        <name>5-amino-6-(D-ribitylamino)uracil</name>
        <dbReference type="ChEBI" id="CHEBI:15934"/>
    </ligand>
</feature>
<feature type="binding site" evidence="1">
    <location>
        <begin position="80"/>
        <end position="82"/>
    </location>
    <ligand>
        <name>5-amino-6-(D-ribitylamino)uracil</name>
        <dbReference type="ChEBI" id="CHEBI:15934"/>
    </ligand>
</feature>
<feature type="binding site" evidence="1">
    <location>
        <begin position="85"/>
        <end position="86"/>
    </location>
    <ligand>
        <name>(2S)-2-hydroxy-3-oxobutyl phosphate</name>
        <dbReference type="ChEBI" id="CHEBI:58830"/>
    </ligand>
</feature>
<feature type="binding site" evidence="1">
    <location>
        <position position="113"/>
    </location>
    <ligand>
        <name>5-amino-6-(D-ribitylamino)uracil</name>
        <dbReference type="ChEBI" id="CHEBI:15934"/>
    </ligand>
</feature>
<feature type="binding site" evidence="1">
    <location>
        <position position="127"/>
    </location>
    <ligand>
        <name>(2S)-2-hydroxy-3-oxobutyl phosphate</name>
        <dbReference type="ChEBI" id="CHEBI:58830"/>
    </ligand>
</feature>
<sequence>MHTFEGDLVAENITIGIVVARFNEFITSKLLAGALDTLKRENVREQDIAVAWVPGAFEIPLIASRMAKSKRYDAIICLGAVIRGSTSHYDYVCNEVSKGIAQTSLDTGVPVLFGVLTTDSIEQAIERAGTKAGNKGSECAQGAIEMVNLIRSMDL</sequence>
<reference key="1">
    <citation type="journal article" date="2008" name="Proc. Natl. Acad. Sci. U.S.A.">
        <title>The genome sequence of Bifidobacterium longum subsp. infantis reveals adaptations for milk utilization within the infant microbiome.</title>
        <authorList>
            <person name="Sela D.A."/>
            <person name="Chapman J."/>
            <person name="Adeuya A."/>
            <person name="Kim J.H."/>
            <person name="Chen F."/>
            <person name="Whitehead T.R."/>
            <person name="Lapidus A."/>
            <person name="Rokhsar D.S."/>
            <person name="Lebrilla C.B."/>
            <person name="German J.B."/>
            <person name="Price N.P."/>
            <person name="Richardson P.M."/>
            <person name="Mills D.A."/>
        </authorList>
    </citation>
    <scope>NUCLEOTIDE SEQUENCE [LARGE SCALE GENOMIC DNA]</scope>
    <source>
        <strain>ATCC 15697 / DSM 20088 / JCM 1222 / NCTC 11817 / S12</strain>
    </source>
</reference>
<reference key="2">
    <citation type="journal article" date="2011" name="Nature">
        <title>Bifidobacteria can protect from enteropathogenic infection through production of acetate.</title>
        <authorList>
            <person name="Fukuda S."/>
            <person name="Toh H."/>
            <person name="Hase K."/>
            <person name="Oshima K."/>
            <person name="Nakanishi Y."/>
            <person name="Yoshimura K."/>
            <person name="Tobe T."/>
            <person name="Clarke J.M."/>
            <person name="Topping D.L."/>
            <person name="Suzuki T."/>
            <person name="Taylor T.D."/>
            <person name="Itoh K."/>
            <person name="Kikuchi J."/>
            <person name="Morita H."/>
            <person name="Hattori M."/>
            <person name="Ohno H."/>
        </authorList>
    </citation>
    <scope>NUCLEOTIDE SEQUENCE [LARGE SCALE GENOMIC DNA]</scope>
    <source>
        <strain>ATCC 15697 / DSM 20088 / JCM 1222 / NCTC 11817 / S12</strain>
    </source>
</reference>
<organism>
    <name type="scientific">Bifidobacterium longum subsp. infantis (strain ATCC 15697 / DSM 20088 / JCM 1222 / NCTC 11817 / S12)</name>
    <dbReference type="NCBI Taxonomy" id="391904"/>
    <lineage>
        <taxon>Bacteria</taxon>
        <taxon>Bacillati</taxon>
        <taxon>Actinomycetota</taxon>
        <taxon>Actinomycetes</taxon>
        <taxon>Bifidobacteriales</taxon>
        <taxon>Bifidobacteriaceae</taxon>
        <taxon>Bifidobacterium</taxon>
    </lineage>
</organism>
<name>RISB_BIFLS</name>
<gene>
    <name evidence="1" type="primary">ribH</name>
    <name type="ordered locus">Blon_0389</name>
    <name type="ordered locus">BLIJ_0396</name>
</gene>
<accession>B7GN04</accession>
<accession>E8MPG6</accession>